<comment type="function">
    <text evidence="1">Catalyzes the conversion of 3-deoxy-D-arabino-heptulosonate 7-phosphate (DAHP) to dehydroquinate (DHQ).</text>
</comment>
<comment type="catalytic activity">
    <reaction evidence="1">
        <text>7-phospho-2-dehydro-3-deoxy-D-arabino-heptonate = 3-dehydroquinate + phosphate</text>
        <dbReference type="Rhea" id="RHEA:21968"/>
        <dbReference type="ChEBI" id="CHEBI:32364"/>
        <dbReference type="ChEBI" id="CHEBI:43474"/>
        <dbReference type="ChEBI" id="CHEBI:58394"/>
        <dbReference type="EC" id="4.2.3.4"/>
    </reaction>
</comment>
<comment type="cofactor">
    <cofactor evidence="1">
        <name>Co(2+)</name>
        <dbReference type="ChEBI" id="CHEBI:48828"/>
    </cofactor>
    <cofactor evidence="1">
        <name>Zn(2+)</name>
        <dbReference type="ChEBI" id="CHEBI:29105"/>
    </cofactor>
    <text evidence="1">Binds 1 divalent metal cation per subunit. Can use either Co(2+) or Zn(2+).</text>
</comment>
<comment type="cofactor">
    <cofactor evidence="1">
        <name>NAD(+)</name>
        <dbReference type="ChEBI" id="CHEBI:57540"/>
    </cofactor>
</comment>
<comment type="pathway">
    <text evidence="1">Metabolic intermediate biosynthesis; chorismate biosynthesis; chorismate from D-erythrose 4-phosphate and phosphoenolpyruvate: step 2/7.</text>
</comment>
<comment type="subcellular location">
    <subcellularLocation>
        <location evidence="1">Cytoplasm</location>
    </subcellularLocation>
</comment>
<comment type="similarity">
    <text evidence="1">Belongs to the sugar phosphate cyclases superfamily. Dehydroquinate synthase family.</text>
</comment>
<evidence type="ECO:0000255" key="1">
    <source>
        <dbReference type="HAMAP-Rule" id="MF_00110"/>
    </source>
</evidence>
<reference key="1">
    <citation type="submission" date="2007-05" db="EMBL/GenBank/DDBJ databases">
        <title>Complete sequence of Pseudomonas putida F1.</title>
        <authorList>
            <consortium name="US DOE Joint Genome Institute"/>
            <person name="Copeland A."/>
            <person name="Lucas S."/>
            <person name="Lapidus A."/>
            <person name="Barry K."/>
            <person name="Detter J.C."/>
            <person name="Glavina del Rio T."/>
            <person name="Hammon N."/>
            <person name="Israni S."/>
            <person name="Dalin E."/>
            <person name="Tice H."/>
            <person name="Pitluck S."/>
            <person name="Chain P."/>
            <person name="Malfatti S."/>
            <person name="Shin M."/>
            <person name="Vergez L."/>
            <person name="Schmutz J."/>
            <person name="Larimer F."/>
            <person name="Land M."/>
            <person name="Hauser L."/>
            <person name="Kyrpides N."/>
            <person name="Lykidis A."/>
            <person name="Parales R."/>
            <person name="Richardson P."/>
        </authorList>
    </citation>
    <scope>NUCLEOTIDE SEQUENCE [LARGE SCALE GENOMIC DNA]</scope>
    <source>
        <strain>ATCC 700007 / DSM 6899 / JCM 31910 / BCRC 17059 / LMG 24140 / F1</strain>
    </source>
</reference>
<protein>
    <recommendedName>
        <fullName evidence="1">3-dehydroquinate synthase</fullName>
        <shortName evidence="1">DHQS</shortName>
        <ecNumber evidence="1">4.2.3.4</ecNumber>
    </recommendedName>
</protein>
<gene>
    <name evidence="1" type="primary">aroB</name>
    <name type="ordered locus">Pput_4951</name>
</gene>
<sequence length="365" mass="39458">MQTLKVDLGERSYPIYIGEGLLDQPELLAPHIAGRQVAIVSNETVAPLYLERLSKALGAYSVLPVVLPDGEAHKNWETLQLIFDGLLTARHDRRTTVVALGGGVIGDMAGFAAACYQRGVDFIQVPTTLLSQVDSSVGGKTGINHPLGKNMVGAFYQPNAVLIDTTSLKTLPARELSAGLAEVIKYGLICDKPFLAWLEDNMQALRALDSAALTEAIRRSCAAKAAVVGADERESGVRATLNLGHTFGHAIETHMGYGVWLHGEAVAAGTVMALEMSMRLGWIDQAERDRGIRLLQDAGLPVVPPQEMTPAHFMEHMAVDKKVLDGRLRLVLLRQMGEAVVTDDYSKEILQATLSADYRAIVAQL</sequence>
<proteinExistence type="inferred from homology"/>
<organism>
    <name type="scientific">Pseudomonas putida (strain ATCC 700007 / DSM 6899 / JCM 31910 / BCRC 17059 / LMG 24140 / F1)</name>
    <dbReference type="NCBI Taxonomy" id="351746"/>
    <lineage>
        <taxon>Bacteria</taxon>
        <taxon>Pseudomonadati</taxon>
        <taxon>Pseudomonadota</taxon>
        <taxon>Gammaproteobacteria</taxon>
        <taxon>Pseudomonadales</taxon>
        <taxon>Pseudomonadaceae</taxon>
        <taxon>Pseudomonas</taxon>
    </lineage>
</organism>
<accession>A5WAB1</accession>
<name>AROB_PSEP1</name>
<keyword id="KW-0028">Amino-acid biosynthesis</keyword>
<keyword id="KW-0057">Aromatic amino acid biosynthesis</keyword>
<keyword id="KW-0170">Cobalt</keyword>
<keyword id="KW-0963">Cytoplasm</keyword>
<keyword id="KW-0456">Lyase</keyword>
<keyword id="KW-0479">Metal-binding</keyword>
<keyword id="KW-0520">NAD</keyword>
<keyword id="KW-0547">Nucleotide-binding</keyword>
<keyword id="KW-0862">Zinc</keyword>
<dbReference type="EC" id="4.2.3.4" evidence="1"/>
<dbReference type="EMBL" id="CP000712">
    <property type="protein sequence ID" value="ABQ81071.1"/>
    <property type="molecule type" value="Genomic_DNA"/>
</dbReference>
<dbReference type="SMR" id="A5WAB1"/>
<dbReference type="KEGG" id="ppf:Pput_4951"/>
<dbReference type="eggNOG" id="COG0337">
    <property type="taxonomic scope" value="Bacteria"/>
</dbReference>
<dbReference type="HOGENOM" id="CLU_001201_0_2_6"/>
<dbReference type="UniPathway" id="UPA00053">
    <property type="reaction ID" value="UER00085"/>
</dbReference>
<dbReference type="GO" id="GO:0005737">
    <property type="term" value="C:cytoplasm"/>
    <property type="evidence" value="ECO:0007669"/>
    <property type="project" value="UniProtKB-SubCell"/>
</dbReference>
<dbReference type="GO" id="GO:0003856">
    <property type="term" value="F:3-dehydroquinate synthase activity"/>
    <property type="evidence" value="ECO:0007669"/>
    <property type="project" value="UniProtKB-UniRule"/>
</dbReference>
<dbReference type="GO" id="GO:0046872">
    <property type="term" value="F:metal ion binding"/>
    <property type="evidence" value="ECO:0007669"/>
    <property type="project" value="UniProtKB-KW"/>
</dbReference>
<dbReference type="GO" id="GO:0000166">
    <property type="term" value="F:nucleotide binding"/>
    <property type="evidence" value="ECO:0007669"/>
    <property type="project" value="UniProtKB-KW"/>
</dbReference>
<dbReference type="GO" id="GO:0008652">
    <property type="term" value="P:amino acid biosynthetic process"/>
    <property type="evidence" value="ECO:0007669"/>
    <property type="project" value="UniProtKB-KW"/>
</dbReference>
<dbReference type="GO" id="GO:0009073">
    <property type="term" value="P:aromatic amino acid family biosynthetic process"/>
    <property type="evidence" value="ECO:0007669"/>
    <property type="project" value="UniProtKB-KW"/>
</dbReference>
<dbReference type="GO" id="GO:0009423">
    <property type="term" value="P:chorismate biosynthetic process"/>
    <property type="evidence" value="ECO:0007669"/>
    <property type="project" value="UniProtKB-UniRule"/>
</dbReference>
<dbReference type="CDD" id="cd08195">
    <property type="entry name" value="DHQS"/>
    <property type="match status" value="1"/>
</dbReference>
<dbReference type="FunFam" id="1.20.1090.10:FF:000002">
    <property type="entry name" value="3-dehydroquinate synthase"/>
    <property type="match status" value="1"/>
</dbReference>
<dbReference type="FunFam" id="3.40.50.1970:FF:000001">
    <property type="entry name" value="3-dehydroquinate synthase"/>
    <property type="match status" value="1"/>
</dbReference>
<dbReference type="Gene3D" id="3.40.50.1970">
    <property type="match status" value="1"/>
</dbReference>
<dbReference type="Gene3D" id="1.20.1090.10">
    <property type="entry name" value="Dehydroquinate synthase-like - alpha domain"/>
    <property type="match status" value="1"/>
</dbReference>
<dbReference type="HAMAP" id="MF_00110">
    <property type="entry name" value="DHQ_synthase"/>
    <property type="match status" value="1"/>
</dbReference>
<dbReference type="InterPro" id="IPR050071">
    <property type="entry name" value="Dehydroquinate_synthase"/>
</dbReference>
<dbReference type="InterPro" id="IPR016037">
    <property type="entry name" value="DHQ_synth_AroB"/>
</dbReference>
<dbReference type="InterPro" id="IPR030963">
    <property type="entry name" value="DHQ_synth_fam"/>
</dbReference>
<dbReference type="InterPro" id="IPR030960">
    <property type="entry name" value="DHQS/DOIS_N"/>
</dbReference>
<dbReference type="InterPro" id="IPR056179">
    <property type="entry name" value="DHQS_C"/>
</dbReference>
<dbReference type="NCBIfam" id="TIGR01357">
    <property type="entry name" value="aroB"/>
    <property type="match status" value="1"/>
</dbReference>
<dbReference type="PANTHER" id="PTHR43622">
    <property type="entry name" value="3-DEHYDROQUINATE SYNTHASE"/>
    <property type="match status" value="1"/>
</dbReference>
<dbReference type="PANTHER" id="PTHR43622:SF7">
    <property type="entry name" value="3-DEHYDROQUINATE SYNTHASE, CHLOROPLASTIC"/>
    <property type="match status" value="1"/>
</dbReference>
<dbReference type="Pfam" id="PF01761">
    <property type="entry name" value="DHQ_synthase"/>
    <property type="match status" value="1"/>
</dbReference>
<dbReference type="Pfam" id="PF24621">
    <property type="entry name" value="DHQS_C"/>
    <property type="match status" value="1"/>
</dbReference>
<dbReference type="PIRSF" id="PIRSF001455">
    <property type="entry name" value="DHQ_synth"/>
    <property type="match status" value="1"/>
</dbReference>
<dbReference type="SUPFAM" id="SSF56796">
    <property type="entry name" value="Dehydroquinate synthase-like"/>
    <property type="match status" value="1"/>
</dbReference>
<feature type="chain" id="PRO_1000094573" description="3-dehydroquinate synthase">
    <location>
        <begin position="1"/>
        <end position="365"/>
    </location>
</feature>
<feature type="binding site" evidence="1">
    <location>
        <begin position="69"/>
        <end position="74"/>
    </location>
    <ligand>
        <name>NAD(+)</name>
        <dbReference type="ChEBI" id="CHEBI:57540"/>
    </ligand>
</feature>
<feature type="binding site" evidence="1">
    <location>
        <begin position="103"/>
        <end position="107"/>
    </location>
    <ligand>
        <name>NAD(+)</name>
        <dbReference type="ChEBI" id="CHEBI:57540"/>
    </ligand>
</feature>
<feature type="binding site" evidence="1">
    <location>
        <begin position="127"/>
        <end position="128"/>
    </location>
    <ligand>
        <name>NAD(+)</name>
        <dbReference type="ChEBI" id="CHEBI:57540"/>
    </ligand>
</feature>
<feature type="binding site" evidence="1">
    <location>
        <position position="140"/>
    </location>
    <ligand>
        <name>NAD(+)</name>
        <dbReference type="ChEBI" id="CHEBI:57540"/>
    </ligand>
</feature>
<feature type="binding site" evidence="1">
    <location>
        <position position="149"/>
    </location>
    <ligand>
        <name>NAD(+)</name>
        <dbReference type="ChEBI" id="CHEBI:57540"/>
    </ligand>
</feature>
<feature type="binding site" evidence="1">
    <location>
        <position position="182"/>
    </location>
    <ligand>
        <name>Zn(2+)</name>
        <dbReference type="ChEBI" id="CHEBI:29105"/>
    </ligand>
</feature>
<feature type="binding site" evidence="1">
    <location>
        <position position="245"/>
    </location>
    <ligand>
        <name>Zn(2+)</name>
        <dbReference type="ChEBI" id="CHEBI:29105"/>
    </ligand>
</feature>
<feature type="binding site" evidence="1">
    <location>
        <position position="262"/>
    </location>
    <ligand>
        <name>Zn(2+)</name>
        <dbReference type="ChEBI" id="CHEBI:29105"/>
    </ligand>
</feature>